<evidence type="ECO:0000255" key="1">
    <source>
        <dbReference type="PROSITE-ProRule" id="PRU00520"/>
    </source>
</evidence>
<evidence type="ECO:0000305" key="2"/>
<keyword id="KW-0378">Hydrolase</keyword>
<keyword id="KW-1185">Reference proteome</keyword>
<comment type="catalytic activity">
    <reaction>
        <text>an acyl phosphate + H2O = a carboxylate + phosphate + H(+)</text>
        <dbReference type="Rhea" id="RHEA:14965"/>
        <dbReference type="ChEBI" id="CHEBI:15377"/>
        <dbReference type="ChEBI" id="CHEBI:15378"/>
        <dbReference type="ChEBI" id="CHEBI:29067"/>
        <dbReference type="ChEBI" id="CHEBI:43474"/>
        <dbReference type="ChEBI" id="CHEBI:59918"/>
        <dbReference type="EC" id="3.6.1.7"/>
    </reaction>
</comment>
<comment type="similarity">
    <text evidence="2">Belongs to the acylphosphatase family.</text>
</comment>
<sequence length="97" mass="11186">MDKRRAHVWISGRVHGVAFRAYTQEAAYHLGIGGWVRNLPDGRVEAVFEGDADKVARMVEWCRKGSPMSRVTEVEVREEDFRGEFVRFEITFGRWGA</sequence>
<organism>
    <name type="scientific">Syntrophobacter fumaroxidans (strain DSM 10017 / MPOB)</name>
    <dbReference type="NCBI Taxonomy" id="335543"/>
    <lineage>
        <taxon>Bacteria</taxon>
        <taxon>Pseudomonadati</taxon>
        <taxon>Thermodesulfobacteriota</taxon>
        <taxon>Syntrophobacteria</taxon>
        <taxon>Syntrophobacterales</taxon>
        <taxon>Syntrophobacteraceae</taxon>
        <taxon>Syntrophobacter</taxon>
    </lineage>
</organism>
<proteinExistence type="inferred from homology"/>
<feature type="chain" id="PRO_0000326828" description="Acylphosphatase">
    <location>
        <begin position="1"/>
        <end position="97"/>
    </location>
</feature>
<feature type="domain" description="Acylphosphatase-like" evidence="1">
    <location>
        <begin position="5"/>
        <end position="92"/>
    </location>
</feature>
<feature type="active site" evidence="1">
    <location>
        <position position="20"/>
    </location>
</feature>
<feature type="active site" evidence="1">
    <location>
        <position position="38"/>
    </location>
</feature>
<protein>
    <recommendedName>
        <fullName>Acylphosphatase</fullName>
        <ecNumber>3.6.1.7</ecNumber>
    </recommendedName>
    <alternativeName>
        <fullName>Acylphosphate phosphohydrolase</fullName>
    </alternativeName>
</protein>
<name>ACYP_SYNFM</name>
<accession>A0LI66</accession>
<dbReference type="EC" id="3.6.1.7"/>
<dbReference type="EMBL" id="CP000478">
    <property type="protein sequence ID" value="ABK17118.1"/>
    <property type="molecule type" value="Genomic_DNA"/>
</dbReference>
<dbReference type="RefSeq" id="WP_011698289.1">
    <property type="nucleotide sequence ID" value="NC_008554.1"/>
</dbReference>
<dbReference type="SMR" id="A0LI66"/>
<dbReference type="FunCoup" id="A0LI66">
    <property type="interactions" value="305"/>
</dbReference>
<dbReference type="STRING" id="335543.Sfum_1427"/>
<dbReference type="KEGG" id="sfu:Sfum_1427"/>
<dbReference type="eggNOG" id="COG1254">
    <property type="taxonomic scope" value="Bacteria"/>
</dbReference>
<dbReference type="HOGENOM" id="CLU_141932_1_2_7"/>
<dbReference type="InParanoid" id="A0LI66"/>
<dbReference type="OrthoDB" id="5295388at2"/>
<dbReference type="Proteomes" id="UP000001784">
    <property type="component" value="Chromosome"/>
</dbReference>
<dbReference type="GO" id="GO:0003998">
    <property type="term" value="F:acylphosphatase activity"/>
    <property type="evidence" value="ECO:0007669"/>
    <property type="project" value="UniProtKB-EC"/>
</dbReference>
<dbReference type="Gene3D" id="3.30.70.100">
    <property type="match status" value="1"/>
</dbReference>
<dbReference type="InterPro" id="IPR020456">
    <property type="entry name" value="Acylphosphatase"/>
</dbReference>
<dbReference type="InterPro" id="IPR001792">
    <property type="entry name" value="Acylphosphatase-like_dom"/>
</dbReference>
<dbReference type="InterPro" id="IPR036046">
    <property type="entry name" value="Acylphosphatase-like_dom_sf"/>
</dbReference>
<dbReference type="InterPro" id="IPR017968">
    <property type="entry name" value="Acylphosphatase_CS"/>
</dbReference>
<dbReference type="NCBIfam" id="NF011016">
    <property type="entry name" value="PRK14444.1"/>
    <property type="match status" value="1"/>
</dbReference>
<dbReference type="PANTHER" id="PTHR47268">
    <property type="entry name" value="ACYLPHOSPHATASE"/>
    <property type="match status" value="1"/>
</dbReference>
<dbReference type="PANTHER" id="PTHR47268:SF4">
    <property type="entry name" value="ACYLPHOSPHATASE"/>
    <property type="match status" value="1"/>
</dbReference>
<dbReference type="Pfam" id="PF00708">
    <property type="entry name" value="Acylphosphatase"/>
    <property type="match status" value="1"/>
</dbReference>
<dbReference type="SUPFAM" id="SSF54975">
    <property type="entry name" value="Acylphosphatase/BLUF domain-like"/>
    <property type="match status" value="1"/>
</dbReference>
<dbReference type="PROSITE" id="PS00151">
    <property type="entry name" value="ACYLPHOSPHATASE_2"/>
    <property type="match status" value="1"/>
</dbReference>
<dbReference type="PROSITE" id="PS51160">
    <property type="entry name" value="ACYLPHOSPHATASE_3"/>
    <property type="match status" value="1"/>
</dbReference>
<gene>
    <name type="primary">acyP</name>
    <name type="ordered locus">Sfum_1427</name>
</gene>
<reference key="1">
    <citation type="submission" date="2006-10" db="EMBL/GenBank/DDBJ databases">
        <title>Complete sequence of Syntrophobacter fumaroxidans MPOB.</title>
        <authorList>
            <consortium name="US DOE Joint Genome Institute"/>
            <person name="Copeland A."/>
            <person name="Lucas S."/>
            <person name="Lapidus A."/>
            <person name="Barry K."/>
            <person name="Detter J.C."/>
            <person name="Glavina del Rio T."/>
            <person name="Hammon N."/>
            <person name="Israni S."/>
            <person name="Pitluck S."/>
            <person name="Goltsman E.G."/>
            <person name="Martinez M."/>
            <person name="Schmutz J."/>
            <person name="Larimer F."/>
            <person name="Land M."/>
            <person name="Hauser L."/>
            <person name="Kyrpides N."/>
            <person name="Kim E."/>
            <person name="Boone D.R."/>
            <person name="Brockman F."/>
            <person name="Culley D."/>
            <person name="Ferry J."/>
            <person name="Gunsalus R."/>
            <person name="McInerney M.J."/>
            <person name="Morrison M."/>
            <person name="Plugge C."/>
            <person name="Rohlin L."/>
            <person name="Scholten J."/>
            <person name="Sieber J."/>
            <person name="Stams A.J.M."/>
            <person name="Worm P."/>
            <person name="Henstra A.M."/>
            <person name="Richardson P."/>
        </authorList>
    </citation>
    <scope>NUCLEOTIDE SEQUENCE [LARGE SCALE GENOMIC DNA]</scope>
    <source>
        <strain>DSM 10017 / MPOB</strain>
    </source>
</reference>